<protein>
    <recommendedName>
        <fullName evidence="1">Endonuclease V</fullName>
        <ecNumber evidence="1">3.1.21.7</ecNumber>
    </recommendedName>
    <alternativeName>
        <fullName evidence="1">Deoxyinosine 3'endonuclease</fullName>
    </alternativeName>
    <alternativeName>
        <fullName evidence="1">Deoxyribonuclease V</fullName>
        <shortName evidence="1">DNase V</shortName>
    </alternativeName>
</protein>
<comment type="function">
    <text evidence="1">DNA repair enzyme involved in the repair of deaminated bases. Selectively cleaves double-stranded DNA at the second phosphodiester bond 3' to a deoxyinosine leaving behind the intact lesion on the nicked DNA.</text>
</comment>
<comment type="catalytic activity">
    <reaction evidence="1">
        <text>Endonucleolytic cleavage at apurinic or apyrimidinic sites to products with a 5'-phosphate.</text>
        <dbReference type="EC" id="3.1.21.7"/>
    </reaction>
</comment>
<comment type="cofactor">
    <cofactor evidence="1">
        <name>Mg(2+)</name>
        <dbReference type="ChEBI" id="CHEBI:18420"/>
    </cofactor>
</comment>
<comment type="subcellular location">
    <subcellularLocation>
        <location evidence="1">Cytoplasm</location>
    </subcellularLocation>
</comment>
<comment type="similarity">
    <text evidence="1">Belongs to the endonuclease V family.</text>
</comment>
<sequence length="222" mass="24962">MINTKALRQEQIAKAQQVICYDDFSPPKLIAGADVGFERQGAITRAAIAVLSYPALELVEYQIARIETTLPYIPGLLSFREYPALMAAWQLLKYKPDLVMVDGHGIAHPRRLGVASHFGLLANVPTIGVAKRRLCGESELLGEQPGSCQPLLDKEEQIGWVWRSKKRCNPLYISTGHRISLDSALLWVERCMKGYRLPETTRWADGIASNRPFFEQMIQKNP</sequence>
<accession>Q7N959</accession>
<reference key="1">
    <citation type="journal article" date="2003" name="Nat. Biotechnol.">
        <title>The genome sequence of the entomopathogenic bacterium Photorhabdus luminescens.</title>
        <authorList>
            <person name="Duchaud E."/>
            <person name="Rusniok C."/>
            <person name="Frangeul L."/>
            <person name="Buchrieser C."/>
            <person name="Givaudan A."/>
            <person name="Taourit S."/>
            <person name="Bocs S."/>
            <person name="Boursaux-Eude C."/>
            <person name="Chandler M."/>
            <person name="Charles J.-F."/>
            <person name="Dassa E."/>
            <person name="Derose R."/>
            <person name="Derzelle S."/>
            <person name="Freyssinet G."/>
            <person name="Gaudriault S."/>
            <person name="Medigue C."/>
            <person name="Lanois A."/>
            <person name="Powell K."/>
            <person name="Siguier P."/>
            <person name="Vincent R."/>
            <person name="Wingate V."/>
            <person name="Zouine M."/>
            <person name="Glaser P."/>
            <person name="Boemare N."/>
            <person name="Danchin A."/>
            <person name="Kunst F."/>
        </authorList>
    </citation>
    <scope>NUCLEOTIDE SEQUENCE [LARGE SCALE GENOMIC DNA]</scope>
    <source>
        <strain>DSM 15139 / CIP 105565 / TT01</strain>
    </source>
</reference>
<evidence type="ECO:0000255" key="1">
    <source>
        <dbReference type="HAMAP-Rule" id="MF_00801"/>
    </source>
</evidence>
<organism>
    <name type="scientific">Photorhabdus laumondii subsp. laumondii (strain DSM 15139 / CIP 105565 / TT01)</name>
    <name type="common">Photorhabdus luminescens subsp. laumondii</name>
    <dbReference type="NCBI Taxonomy" id="243265"/>
    <lineage>
        <taxon>Bacteria</taxon>
        <taxon>Pseudomonadati</taxon>
        <taxon>Pseudomonadota</taxon>
        <taxon>Gammaproteobacteria</taxon>
        <taxon>Enterobacterales</taxon>
        <taxon>Morganellaceae</taxon>
        <taxon>Photorhabdus</taxon>
    </lineage>
</organism>
<keyword id="KW-0963">Cytoplasm</keyword>
<keyword id="KW-0227">DNA damage</keyword>
<keyword id="KW-0234">DNA repair</keyword>
<keyword id="KW-0255">Endonuclease</keyword>
<keyword id="KW-0378">Hydrolase</keyword>
<keyword id="KW-0460">Magnesium</keyword>
<keyword id="KW-0479">Metal-binding</keyword>
<keyword id="KW-0540">Nuclease</keyword>
<keyword id="KW-1185">Reference proteome</keyword>
<gene>
    <name evidence="1" type="primary">nfi</name>
    <name type="ordered locus">plu0490</name>
</gene>
<name>NFI_PHOLL</name>
<proteinExistence type="inferred from homology"/>
<dbReference type="EC" id="3.1.21.7" evidence="1"/>
<dbReference type="EMBL" id="BX571860">
    <property type="protein sequence ID" value="CAE12785.1"/>
    <property type="molecule type" value="Genomic_DNA"/>
</dbReference>
<dbReference type="RefSeq" id="WP_011144875.1">
    <property type="nucleotide sequence ID" value="NC_005126.1"/>
</dbReference>
<dbReference type="SMR" id="Q7N959"/>
<dbReference type="STRING" id="243265.plu0490"/>
<dbReference type="GeneID" id="48846775"/>
<dbReference type="KEGG" id="plu:plu0490"/>
<dbReference type="eggNOG" id="COG1515">
    <property type="taxonomic scope" value="Bacteria"/>
</dbReference>
<dbReference type="HOGENOM" id="CLU_047631_1_0_6"/>
<dbReference type="OrthoDB" id="9790916at2"/>
<dbReference type="Proteomes" id="UP000002514">
    <property type="component" value="Chromosome"/>
</dbReference>
<dbReference type="GO" id="GO:0005737">
    <property type="term" value="C:cytoplasm"/>
    <property type="evidence" value="ECO:0007669"/>
    <property type="project" value="UniProtKB-SubCell"/>
</dbReference>
<dbReference type="GO" id="GO:0043737">
    <property type="term" value="F:deoxyribonuclease V activity"/>
    <property type="evidence" value="ECO:0007669"/>
    <property type="project" value="UniProtKB-UniRule"/>
</dbReference>
<dbReference type="GO" id="GO:0000287">
    <property type="term" value="F:magnesium ion binding"/>
    <property type="evidence" value="ECO:0007669"/>
    <property type="project" value="UniProtKB-UniRule"/>
</dbReference>
<dbReference type="GO" id="GO:0016891">
    <property type="term" value="F:RNA endonuclease activity, producing 5'-phosphomonoesters"/>
    <property type="evidence" value="ECO:0007669"/>
    <property type="project" value="TreeGrafter"/>
</dbReference>
<dbReference type="GO" id="GO:0003727">
    <property type="term" value="F:single-stranded RNA binding"/>
    <property type="evidence" value="ECO:0007669"/>
    <property type="project" value="TreeGrafter"/>
</dbReference>
<dbReference type="GO" id="GO:0006281">
    <property type="term" value="P:DNA repair"/>
    <property type="evidence" value="ECO:0007669"/>
    <property type="project" value="UniProtKB-UniRule"/>
</dbReference>
<dbReference type="CDD" id="cd06559">
    <property type="entry name" value="Endonuclease_V"/>
    <property type="match status" value="1"/>
</dbReference>
<dbReference type="FunFam" id="3.30.2170.10:FF:000001">
    <property type="entry name" value="Endonuclease V"/>
    <property type="match status" value="1"/>
</dbReference>
<dbReference type="Gene3D" id="3.30.2170.10">
    <property type="entry name" value="archaeoglobus fulgidus dsm 4304 superfamily"/>
    <property type="match status" value="1"/>
</dbReference>
<dbReference type="HAMAP" id="MF_00801">
    <property type="entry name" value="Endonuclease_5"/>
    <property type="match status" value="1"/>
</dbReference>
<dbReference type="InterPro" id="IPR007581">
    <property type="entry name" value="Endonuclease-V"/>
</dbReference>
<dbReference type="NCBIfam" id="NF008629">
    <property type="entry name" value="PRK11617.1"/>
    <property type="match status" value="1"/>
</dbReference>
<dbReference type="PANTHER" id="PTHR28511">
    <property type="entry name" value="ENDONUCLEASE V"/>
    <property type="match status" value="1"/>
</dbReference>
<dbReference type="PANTHER" id="PTHR28511:SF1">
    <property type="entry name" value="ENDONUCLEASE V"/>
    <property type="match status" value="1"/>
</dbReference>
<dbReference type="Pfam" id="PF04493">
    <property type="entry name" value="Endonuclease_5"/>
    <property type="match status" value="1"/>
</dbReference>
<feature type="chain" id="PRO_0000159666" description="Endonuclease V">
    <location>
        <begin position="1"/>
        <end position="222"/>
    </location>
</feature>
<feature type="binding site" evidence="1">
    <location>
        <position position="34"/>
    </location>
    <ligand>
        <name>Mg(2+)</name>
        <dbReference type="ChEBI" id="CHEBI:18420"/>
    </ligand>
</feature>
<feature type="binding site" evidence="1">
    <location>
        <position position="102"/>
    </location>
    <ligand>
        <name>Mg(2+)</name>
        <dbReference type="ChEBI" id="CHEBI:18420"/>
    </ligand>
</feature>
<feature type="site" description="Interaction with target DNA" evidence="1">
    <location>
        <position position="72"/>
    </location>
</feature>